<dbReference type="EMBL" id="DQ227276">
    <property type="protein sequence ID" value="ABB53647.1"/>
    <property type="status" value="ALT_INIT"/>
    <property type="molecule type" value="mRNA"/>
</dbReference>
<dbReference type="RefSeq" id="NP_001033756.1">
    <property type="nucleotide sequence ID" value="NM_001038667.1"/>
</dbReference>
<dbReference type="SMR" id="Q2Q421"/>
<dbReference type="STRING" id="9615.ENSCAFP00000024120"/>
<dbReference type="MEROPS" id="P02.001"/>
<dbReference type="GlyCosmos" id="Q2Q421">
    <property type="glycosylation" value="7 sites, No reported glycans"/>
</dbReference>
<dbReference type="PaxDb" id="9612-ENSCAFP00000024120"/>
<dbReference type="GeneID" id="610750"/>
<dbReference type="KEGG" id="cfa:610750"/>
<dbReference type="CTD" id="30817"/>
<dbReference type="eggNOG" id="KOG4193">
    <property type="taxonomic scope" value="Eukaryota"/>
</dbReference>
<dbReference type="InParanoid" id="Q2Q421"/>
<dbReference type="OrthoDB" id="9747624at2759"/>
<dbReference type="Proteomes" id="UP000002254">
    <property type="component" value="Unplaced"/>
</dbReference>
<dbReference type="Proteomes" id="UP000694429">
    <property type="component" value="Unplaced"/>
</dbReference>
<dbReference type="Proteomes" id="UP000694542">
    <property type="component" value="Unplaced"/>
</dbReference>
<dbReference type="Proteomes" id="UP000805418">
    <property type="component" value="Unplaced"/>
</dbReference>
<dbReference type="GO" id="GO:0031256">
    <property type="term" value="C:leading edge membrane"/>
    <property type="evidence" value="ECO:0000250"/>
    <property type="project" value="UniProtKB"/>
</dbReference>
<dbReference type="GO" id="GO:0005886">
    <property type="term" value="C:plasma membrane"/>
    <property type="evidence" value="ECO:0000318"/>
    <property type="project" value="GO_Central"/>
</dbReference>
<dbReference type="GO" id="GO:0032587">
    <property type="term" value="C:ruffle membrane"/>
    <property type="evidence" value="ECO:0007669"/>
    <property type="project" value="UniProtKB-SubCell"/>
</dbReference>
<dbReference type="GO" id="GO:0005509">
    <property type="term" value="F:calcium ion binding"/>
    <property type="evidence" value="ECO:0007669"/>
    <property type="project" value="InterPro"/>
</dbReference>
<dbReference type="GO" id="GO:0035374">
    <property type="term" value="F:chondroitin sulfate binding"/>
    <property type="evidence" value="ECO:0000250"/>
    <property type="project" value="UniProtKB"/>
</dbReference>
<dbReference type="GO" id="GO:0004930">
    <property type="term" value="F:G protein-coupled receptor activity"/>
    <property type="evidence" value="ECO:0000318"/>
    <property type="project" value="GO_Central"/>
</dbReference>
<dbReference type="GO" id="GO:0007189">
    <property type="term" value="P:adenylate cyclase-activating G protein-coupled receptor signaling pathway"/>
    <property type="evidence" value="ECO:0000318"/>
    <property type="project" value="GO_Central"/>
</dbReference>
<dbReference type="GO" id="GO:0007155">
    <property type="term" value="P:cell adhesion"/>
    <property type="evidence" value="ECO:0000250"/>
    <property type="project" value="UniProtKB"/>
</dbReference>
<dbReference type="GO" id="GO:0016477">
    <property type="term" value="P:cell migration"/>
    <property type="evidence" value="ECO:0000250"/>
    <property type="project" value="UniProtKB"/>
</dbReference>
<dbReference type="GO" id="GO:0007166">
    <property type="term" value="P:cell surface receptor signaling pathway"/>
    <property type="evidence" value="ECO:0007669"/>
    <property type="project" value="InterPro"/>
</dbReference>
<dbReference type="GO" id="GO:0071621">
    <property type="term" value="P:granulocyte chemotaxis"/>
    <property type="evidence" value="ECO:0000250"/>
    <property type="project" value="UniProtKB"/>
</dbReference>
<dbReference type="GO" id="GO:0006954">
    <property type="term" value="P:inflammatory response"/>
    <property type="evidence" value="ECO:0007669"/>
    <property type="project" value="UniProtKB-KW"/>
</dbReference>
<dbReference type="CDD" id="cd00054">
    <property type="entry name" value="EGF_CA"/>
    <property type="match status" value="4"/>
</dbReference>
<dbReference type="FunFam" id="2.10.25.10:FF:000177">
    <property type="entry name" value="Adhesion G protein-coupled receptor E2"/>
    <property type="match status" value="1"/>
</dbReference>
<dbReference type="FunFam" id="2.10.25.10:FF:000216">
    <property type="entry name" value="Adhesion G protein-coupled receptor E2"/>
    <property type="match status" value="1"/>
</dbReference>
<dbReference type="FunFam" id="2.10.25.10:FF:000269">
    <property type="entry name" value="Adhesion G protein-coupled receptor E2"/>
    <property type="match status" value="1"/>
</dbReference>
<dbReference type="FunFam" id="2.10.25.10:FF:000422">
    <property type="entry name" value="Adhesion G protein-coupled receptor E2"/>
    <property type="match status" value="1"/>
</dbReference>
<dbReference type="FunFam" id="1.20.1070.10:FF:000054">
    <property type="entry name" value="Adhesion G protein-coupled receptor E3"/>
    <property type="match status" value="1"/>
</dbReference>
<dbReference type="FunFam" id="2.60.220.50:FF:000007">
    <property type="entry name" value="Adhesion G protein-coupled receptor E5"/>
    <property type="match status" value="1"/>
</dbReference>
<dbReference type="FunFam" id="2.10.25.10:FF:000003">
    <property type="entry name" value="fibrillin-1 isoform X1"/>
    <property type="match status" value="1"/>
</dbReference>
<dbReference type="Gene3D" id="2.60.220.50">
    <property type="match status" value="1"/>
</dbReference>
<dbReference type="Gene3D" id="2.10.25.10">
    <property type="entry name" value="Laminin"/>
    <property type="match status" value="5"/>
</dbReference>
<dbReference type="Gene3D" id="1.20.1070.10">
    <property type="entry name" value="Rhodopsin 7-helix transmembrane proteins"/>
    <property type="match status" value="1"/>
</dbReference>
<dbReference type="InterPro" id="IPR001881">
    <property type="entry name" value="EGF-like_Ca-bd_dom"/>
</dbReference>
<dbReference type="InterPro" id="IPR000742">
    <property type="entry name" value="EGF-like_dom"/>
</dbReference>
<dbReference type="InterPro" id="IPR000152">
    <property type="entry name" value="EGF-type_Asp/Asn_hydroxyl_site"/>
</dbReference>
<dbReference type="InterPro" id="IPR018097">
    <property type="entry name" value="EGF_Ca-bd_CS"/>
</dbReference>
<dbReference type="InterPro" id="IPR057244">
    <property type="entry name" value="GAIN_B"/>
</dbReference>
<dbReference type="InterPro" id="IPR046338">
    <property type="entry name" value="GAIN_dom_sf"/>
</dbReference>
<dbReference type="InterPro" id="IPR017981">
    <property type="entry name" value="GPCR_2-like_7TM"/>
</dbReference>
<dbReference type="InterPro" id="IPR003056">
    <property type="entry name" value="GPCR_2_ADGRE2_ADGRE5"/>
</dbReference>
<dbReference type="InterPro" id="IPR000832">
    <property type="entry name" value="GPCR_2_secretin-like"/>
</dbReference>
<dbReference type="InterPro" id="IPR017983">
    <property type="entry name" value="GPCR_2_secretin-like_CS"/>
</dbReference>
<dbReference type="InterPro" id="IPR000203">
    <property type="entry name" value="GPS"/>
</dbReference>
<dbReference type="InterPro" id="IPR009030">
    <property type="entry name" value="Growth_fac_rcpt_cys_sf"/>
</dbReference>
<dbReference type="InterPro" id="IPR049883">
    <property type="entry name" value="NOTCH1_EGF-like"/>
</dbReference>
<dbReference type="PANTHER" id="PTHR12011:SF328">
    <property type="entry name" value="ADHESION G PROTEIN-COUPLED RECEPTOR E2"/>
    <property type="match status" value="1"/>
</dbReference>
<dbReference type="PANTHER" id="PTHR12011">
    <property type="entry name" value="ADHESION G-PROTEIN COUPLED RECEPTOR"/>
    <property type="match status" value="1"/>
</dbReference>
<dbReference type="Pfam" id="PF00002">
    <property type="entry name" value="7tm_2"/>
    <property type="match status" value="1"/>
</dbReference>
<dbReference type="Pfam" id="PF07645">
    <property type="entry name" value="EGF_CA"/>
    <property type="match status" value="4"/>
</dbReference>
<dbReference type="Pfam" id="PF01825">
    <property type="entry name" value="GPS"/>
    <property type="match status" value="1"/>
</dbReference>
<dbReference type="PRINTS" id="PR01278">
    <property type="entry name" value="CD97PROTEIN"/>
</dbReference>
<dbReference type="PRINTS" id="PR00249">
    <property type="entry name" value="GPCRSECRETIN"/>
</dbReference>
<dbReference type="SMART" id="SM00181">
    <property type="entry name" value="EGF"/>
    <property type="match status" value="5"/>
</dbReference>
<dbReference type="SMART" id="SM00179">
    <property type="entry name" value="EGF_CA"/>
    <property type="match status" value="4"/>
</dbReference>
<dbReference type="SMART" id="SM00303">
    <property type="entry name" value="GPS"/>
    <property type="match status" value="1"/>
</dbReference>
<dbReference type="SUPFAM" id="SSF57196">
    <property type="entry name" value="EGF/Laminin"/>
    <property type="match status" value="1"/>
</dbReference>
<dbReference type="SUPFAM" id="SSF57184">
    <property type="entry name" value="Growth factor receptor domain"/>
    <property type="match status" value="1"/>
</dbReference>
<dbReference type="PROSITE" id="PS00010">
    <property type="entry name" value="ASX_HYDROXYL"/>
    <property type="match status" value="4"/>
</dbReference>
<dbReference type="PROSITE" id="PS50026">
    <property type="entry name" value="EGF_3"/>
    <property type="match status" value="4"/>
</dbReference>
<dbReference type="PROSITE" id="PS01187">
    <property type="entry name" value="EGF_CA"/>
    <property type="match status" value="4"/>
</dbReference>
<dbReference type="PROSITE" id="PS00650">
    <property type="entry name" value="G_PROTEIN_RECEP_F2_2"/>
    <property type="match status" value="1"/>
</dbReference>
<dbReference type="PROSITE" id="PS50261">
    <property type="entry name" value="G_PROTEIN_RECEP_F2_4"/>
    <property type="match status" value="1"/>
</dbReference>
<dbReference type="PROSITE" id="PS50221">
    <property type="entry name" value="GAIN_B"/>
    <property type="match status" value="1"/>
</dbReference>
<accession>Q2Q421</accession>
<organism>
    <name type="scientific">Canis lupus familiaris</name>
    <name type="common">Dog</name>
    <name type="synonym">Canis familiaris</name>
    <dbReference type="NCBI Taxonomy" id="9615"/>
    <lineage>
        <taxon>Eukaryota</taxon>
        <taxon>Metazoa</taxon>
        <taxon>Chordata</taxon>
        <taxon>Craniata</taxon>
        <taxon>Vertebrata</taxon>
        <taxon>Euteleostomi</taxon>
        <taxon>Mammalia</taxon>
        <taxon>Eutheria</taxon>
        <taxon>Laurasiatheria</taxon>
        <taxon>Carnivora</taxon>
        <taxon>Caniformia</taxon>
        <taxon>Canidae</taxon>
        <taxon>Canis</taxon>
    </lineage>
</organism>
<sequence length="830" mass="91452">MRHGHPRLLPGLLMLLLLPLGAAAQKTSGCARWCPPKSTCVNATTCRCSPGFSSLSGEIFSSPLESCDDIDECGPPPLVSCGRLADCQNTEGSYHCMCSPGYALASGATTFMNESENTCRDVDECQLKPRVCKSRGICTNTKGSYTCKCPPGFELNLGDLNLCTDVNECTSGQNPCHNSTHCLNNIGGYECRCRPGWKPVPGSPNGPKSTVCEDVDECSSGKHTCHYSTVCINTVGSYKCRCRRGWKPKPRFQDRQLNTTCEVPAEMSFPTWTPPPGIKSQRLSNFFERVQELHRDFKPALAQETIQDLIQEVDELLEIPGDLEALPHSEQHCVATNLLVGLEGVLRNVSQAMPNGPWTFNASAGTDLSLEVQEEGYRNVTLSQNLAKMMLKWDVVHKSGDSGPSVVGLLSTPGMGKLLAEAPLVLEPEKQAVLHGAPKGLLQGVSSVLLSDVISVFMSNKVTQKLSSPVTFIFSHHSATHEPKLKVFCVFWEHSQDECGHWSTRGCTVVDSGDTSTTCQCTHLSSFAVLMAHYDVQEEDLVLPVITYVGLGLSLLCLLLAALTFLLCKAIQNTSTSLHLQLLICLFLAHLLFLMAIDRTEIKVLCSIIAGALHYLYLASFTWMLLEGLHLFLTARNLMVVNYSSVSMLMKKLMYPVGYGVPTLIVAISAASRSHLYGTRTRCWLNPEERFIWSFLGPVCTIFSVNLGFFLMTLWILKSKLSSLNSDVSTLQNTRMLTFKAIAQLFILGCTWCLGILQVGPAAHVMAYLFTIINSLQGVFIFLVYCLLSQQVREEYGKWFKGIRKTRAESEKYTLSSRAMSDVNKPMMVN</sequence>
<evidence type="ECO:0000250" key="1"/>
<evidence type="ECO:0000250" key="2">
    <source>
        <dbReference type="UniProtKB" id="Q9UHX3"/>
    </source>
</evidence>
<evidence type="ECO:0000255" key="3"/>
<evidence type="ECO:0000255" key="4">
    <source>
        <dbReference type="PROSITE-ProRule" id="PRU00076"/>
    </source>
</evidence>
<evidence type="ECO:0000255" key="5">
    <source>
        <dbReference type="PROSITE-ProRule" id="PRU00098"/>
    </source>
</evidence>
<evidence type="ECO:0000305" key="6"/>
<feature type="signal peptide" evidence="3">
    <location>
        <begin position="1"/>
        <end position="22"/>
    </location>
</feature>
<feature type="chain" id="PRO_0000250960" description="Adhesion G protein-coupled receptor E2">
    <location>
        <begin position="23"/>
        <end position="830"/>
    </location>
</feature>
<feature type="topological domain" description="Extracellular" evidence="6">
    <location>
        <begin position="23"/>
        <end position="540"/>
    </location>
</feature>
<feature type="transmembrane region" description="Helical; Name=1" evidence="3">
    <location>
        <begin position="541"/>
        <end position="561"/>
    </location>
</feature>
<feature type="topological domain" description="Cytoplasmic" evidence="6">
    <location>
        <begin position="562"/>
        <end position="576"/>
    </location>
</feature>
<feature type="transmembrane region" description="Helical; Name=2" evidence="3">
    <location>
        <begin position="577"/>
        <end position="597"/>
    </location>
</feature>
<feature type="topological domain" description="Extracellular" evidence="6">
    <location>
        <begin position="598"/>
        <end position="603"/>
    </location>
</feature>
<feature type="transmembrane region" description="Helical; Name=3" evidence="3">
    <location>
        <begin position="604"/>
        <end position="624"/>
    </location>
</feature>
<feature type="topological domain" description="Cytoplasmic" evidence="6">
    <location>
        <begin position="625"/>
        <end position="651"/>
    </location>
</feature>
<feature type="transmembrane region" description="Helical; Name=4" evidence="3">
    <location>
        <begin position="652"/>
        <end position="672"/>
    </location>
</feature>
<feature type="topological domain" description="Extracellular" evidence="6">
    <location>
        <begin position="673"/>
        <end position="690"/>
    </location>
</feature>
<feature type="transmembrane region" description="Helical; Name=5" evidence="3">
    <location>
        <begin position="691"/>
        <end position="711"/>
    </location>
</feature>
<feature type="topological domain" description="Cytoplasmic" evidence="6">
    <location>
        <begin position="712"/>
        <end position="744"/>
    </location>
</feature>
<feature type="transmembrane region" description="Helical; Name=6" evidence="3">
    <location>
        <begin position="745"/>
        <end position="765"/>
    </location>
</feature>
<feature type="topological domain" description="Extracellular" evidence="6">
    <location>
        <begin position="766"/>
        <end position="767"/>
    </location>
</feature>
<feature type="transmembrane region" description="Helical; Name=7" evidence="3">
    <location>
        <begin position="768"/>
        <end position="788"/>
    </location>
</feature>
<feature type="topological domain" description="Cytoplasmic" evidence="6">
    <location>
        <begin position="789"/>
        <end position="830"/>
    </location>
</feature>
<feature type="domain" description="EGF-like 1" evidence="4">
    <location>
        <begin position="26"/>
        <end position="68"/>
    </location>
</feature>
<feature type="domain" description="EGF-like 1; calcium-binding" evidence="4">
    <location>
        <begin position="69"/>
        <end position="108"/>
    </location>
</feature>
<feature type="domain" description="EGF-like 2; calcium-binding" evidence="4">
    <location>
        <begin position="121"/>
        <end position="159"/>
    </location>
</feature>
<feature type="domain" description="EGF-like 3; calcium-binding" evidence="4">
    <location>
        <begin position="165"/>
        <end position="203"/>
    </location>
</feature>
<feature type="domain" description="EGF-like 4; calcium-binding" evidence="4">
    <location>
        <begin position="214"/>
        <end position="253"/>
    </location>
</feature>
<feature type="domain" description="GAIN-B" evidence="5">
    <location>
        <begin position="358"/>
        <end position="537"/>
    </location>
</feature>
<feature type="region of interest" description="GPS" evidence="5">
    <location>
        <begin position="489"/>
        <end position="537"/>
    </location>
</feature>
<feature type="site" description="Cleavage; by autolysis" evidence="5">
    <location>
        <begin position="524"/>
        <end position="525"/>
    </location>
</feature>
<feature type="glycosylation site" description="N-linked (GlcNAc...) asparagine" evidence="3">
    <location>
        <position position="42"/>
    </location>
</feature>
<feature type="glycosylation site" description="N-linked (GlcNAc...) asparagine" evidence="3">
    <location>
        <position position="113"/>
    </location>
</feature>
<feature type="glycosylation site" description="N-linked (GlcNAc...) asparagine" evidence="3">
    <location>
        <position position="178"/>
    </location>
</feature>
<feature type="glycosylation site" description="N-linked (GlcNAc...) asparagine" evidence="3">
    <location>
        <position position="258"/>
    </location>
</feature>
<feature type="glycosylation site" description="N-linked (GlcNAc...) asparagine" evidence="3">
    <location>
        <position position="348"/>
    </location>
</feature>
<feature type="glycosylation site" description="N-linked (GlcNAc...) asparagine" evidence="3">
    <location>
        <position position="361"/>
    </location>
</feature>
<feature type="glycosylation site" description="N-linked (GlcNAc...) asparagine" evidence="3">
    <location>
        <position position="379"/>
    </location>
</feature>
<feature type="disulfide bond" evidence="4">
    <location>
        <begin position="30"/>
        <end position="40"/>
    </location>
</feature>
<feature type="disulfide bond" evidence="4">
    <location>
        <begin position="34"/>
        <end position="46"/>
    </location>
</feature>
<feature type="disulfide bond" evidence="4">
    <location>
        <begin position="48"/>
        <end position="67"/>
    </location>
</feature>
<feature type="disulfide bond" evidence="4">
    <location>
        <begin position="73"/>
        <end position="87"/>
    </location>
</feature>
<feature type="disulfide bond" evidence="4">
    <location>
        <begin position="81"/>
        <end position="96"/>
    </location>
</feature>
<feature type="disulfide bond" evidence="4">
    <location>
        <begin position="125"/>
        <end position="138"/>
    </location>
</feature>
<feature type="disulfide bond" evidence="4">
    <location>
        <begin position="132"/>
        <end position="147"/>
    </location>
</feature>
<feature type="disulfide bond" evidence="4">
    <location>
        <begin position="169"/>
        <end position="182"/>
    </location>
</feature>
<feature type="disulfide bond" evidence="4">
    <location>
        <begin position="176"/>
        <end position="191"/>
    </location>
</feature>
<feature type="disulfide bond" evidence="4">
    <location>
        <begin position="218"/>
        <end position="231"/>
    </location>
</feature>
<feature type="disulfide bond" evidence="4">
    <location>
        <begin position="225"/>
        <end position="240"/>
    </location>
</feature>
<feature type="disulfide bond" evidence="5">
    <location>
        <begin position="489"/>
        <end position="519"/>
    </location>
</feature>
<feature type="disulfide bond" evidence="5">
    <location>
        <begin position="507"/>
        <end position="521"/>
    </location>
</feature>
<keyword id="KW-0068">Autocatalytic cleavage</keyword>
<keyword id="KW-0106">Calcium</keyword>
<keyword id="KW-0130">Cell adhesion</keyword>
<keyword id="KW-1003">Cell membrane</keyword>
<keyword id="KW-0966">Cell projection</keyword>
<keyword id="KW-1015">Disulfide bond</keyword>
<keyword id="KW-0245">EGF-like domain</keyword>
<keyword id="KW-0325">Glycoprotein</keyword>
<keyword id="KW-0395">Inflammatory response</keyword>
<keyword id="KW-0472">Membrane</keyword>
<keyword id="KW-1185">Reference proteome</keyword>
<keyword id="KW-0677">Repeat</keyword>
<keyword id="KW-0732">Signal</keyword>
<keyword id="KW-0812">Transmembrane</keyword>
<keyword id="KW-1133">Transmembrane helix</keyword>
<protein>
    <recommendedName>
        <fullName>Adhesion G protein-coupled receptor E2</fullName>
    </recommendedName>
    <alternativeName>
        <fullName>EGF-like module receptor 2</fullName>
    </alternativeName>
    <alternativeName>
        <fullName>EGF-like module-containing mucin-like hormone receptor-like 2</fullName>
    </alternativeName>
    <cdAntigenName>CD312</cdAntigenName>
</protein>
<reference key="1">
    <citation type="submission" date="2005-09" db="EMBL/GenBank/DDBJ databases">
        <title>A unique mode of concerted evolution of the EGF-TM7 receptor chimera EMR2.</title>
        <authorList>
            <person name="Kwakkenbos M.J."/>
            <person name="Matmati M."/>
            <person name="Pouwels W."/>
            <person name="Wang Y."/>
            <person name="Bontrop R.E."/>
            <person name="Heidt P.J."/>
            <person name="Hoek R.M."/>
            <person name="Hamann J."/>
        </authorList>
    </citation>
    <scope>NUCLEOTIDE SEQUENCE [MRNA]</scope>
</reference>
<gene>
    <name type="primary">ADGRE2</name>
    <name type="synonym">EMR2</name>
</gene>
<proteinExistence type="evidence at transcript level"/>
<comment type="function">
    <text evidence="2">Cell surface receptor that binds to the chondroitin sulfate moiety of glycosaminoglycan chains and promotes cell attachment. Promotes granulocyte chemotaxis, degranulation and adhesion. In macrophages, promotes the release of inflammatory cytokines, including IL8 and TNF. Signals probably through G-proteins.</text>
</comment>
<comment type="subunit">
    <text evidence="2">Forms a heterodimer, consisting of a large extracellular region non-covalently linked to a seven-transmembrane moiety. Interacts with chondroitin sulfate; the interaction with chondroitin sulfate is calcium-dependent. Interacts with CD55.</text>
</comment>
<comment type="subcellular location">
    <subcellularLocation>
        <location evidence="2">Cell membrane</location>
        <topology>Multi-pass membrane protein</topology>
    </subcellularLocation>
    <subcellularLocation>
        <location evidence="2">Cell projection</location>
        <location evidence="2">Ruffle membrane</location>
        <topology evidence="3">Multi-pass membrane protein</topology>
    </subcellularLocation>
    <text evidence="1">Localized at the leading edge of migrating cells.</text>
</comment>
<comment type="domain">
    <text evidence="2">The GPS region of the GAIN-B domain is necessary, but not sufficient for receptor cleavage, which require the entire extracellular stalk.</text>
</comment>
<comment type="domain">
    <text evidence="2">Binding to chondroitin sulfate is mediated by the fourth EGF domain.</text>
</comment>
<comment type="PTM">
    <text evidence="2">Autoproteolytically cleaved into 2 subunits, an extracellular alpha subunit and a seven-transmembrane beta subunit.</text>
</comment>
<comment type="similarity">
    <text evidence="6">Belongs to the G-protein coupled receptor 2 family. Adhesion G-protein coupled receptor (ADGR) subfamily.</text>
</comment>
<comment type="sequence caution" evidence="6">
    <conflict type="erroneous initiation">
        <sequence resource="EMBL-CDS" id="ABB53647"/>
    </conflict>
</comment>
<name>AGRE2_CANLF</name>